<keyword id="KW-0002">3D-structure</keyword>
<keyword id="KW-0963">Cytoplasm</keyword>
<keyword id="KW-0479">Metal-binding</keyword>
<keyword id="KW-0539">Nucleus</keyword>
<keyword id="KW-1185">Reference proteome</keyword>
<keyword id="KW-0677">Repeat</keyword>
<keyword id="KW-0808">Transferase</keyword>
<keyword id="KW-0833">Ubl conjugation pathway</keyword>
<keyword id="KW-0862">Zinc</keyword>
<keyword id="KW-0863">Zinc-finger</keyword>
<sequence>MSFGGINTFQQYNTDLGLGHNGVRISLNYFDGLPDPSLLNSLYSNELKLIFKSLLKRDETTKEKALMDLSNLISDFNQNEYFFNDIFLLCWSQIYAKLIISDYKVIRLQSHQITIMLVKSLRKKISKFLKDFIPLILLGTCELDYSVSKPSLNELTECFNKDPAKINALWAVFQEQLLNLVKEIVVNENEDTISDERYSSKEESEFRYHRVIASAVLLLIKLFVHNKDVSERNSSSLKVILSDESIWKLLNLKNGQNTNAYETVLRLIDVLYTRGYMPSHKNIMKLAVKKLLKSLTHITSKNILKVCPVLPSILNLLATLDDYEDGTIWSYDKSSKEKVLKFLSVSRTSPSPGFFNAVFALYSSTKRHSFLDYYLEWLPFWQKSVQRLNEKGFSARNSAEVLNEFWTNFLKFAEDSSEERVKKMVESEIFNSLSCGKSLSEYTKLNQTLSGVFPPDKWEREIEDYFTSDEDIRKIKVSFEKNLFALLVTSPNNESAISRLFDFFVQLIETDPSNVFNKYDGVYDALNYFLDSDMIFLNGKIGKFINEIPTLVQESTYQNFAGIMAQYSNSKFFKMNTDAITSLEDFFIVALSFNLPKTIILATMNELDNDIYQQLMKSDSLELELYIEDFMKNYKFDDSGEIFKGNNKFLNQRTITTLYRSAVANGQVEQFCAVLSKLDETFFSTLLLNTDFLSCALYEVSEDTNEKLFKLSLQLAKGNSEIANKLAQVILQHAQVYFSPGAKEKYVTHAVELINGCNDTSQIFFPANAIEVFARYMPAIDYRSSLVSSLSTNTHLLLTDDKPINLKNMQKLIRYALFLDALLDALPERVNNHIVAFITVVSELVTDYNCLSEEPNDLYYDFGHTFFKHGKVNLNFSDIVGNVIQPANGGDAMLTFDIAESNSVYFFYYSRVLYKVLLNSIDTVSSTTLNGLLASVESFVTKTVRDQKSTDKDYLLCAILLLMFNRSNSKDEITKLRTLLASQLIGIREVELVDQEFKSLALLNNLLDIPQADKQFVPIAPQRLNMIFRSILKWLDSDLAYEPSFSTVRLLLLDFFTKLMRFEGVRDMGITAFELSERLLADSLSMCQIDDTLYLLELRSSCLNLYETLSQGVSKNGEEISEYGDEIQENLIELMFLNFNQERNNQVSTLFYQKLYKVISSMELKKLESQYKRIFEVVLNDKDIGSNINQSRLLTTLLGSLVVKTQQDIIIEYELRIQKQTGSDVDGSASDNDVNSKFKLPQKLLQKVTDEVPKEYLEYENKNSFIKYLWYWHLILMYFKDTSYNMRQIFIEQLKEAGLINRMFDFITDQIDLRDTEFWKQVDTKEISEYNIVGNNFSPYKEDIFEECKKLLGHTLYQLFNNVGCLTSIWWLNIKDRTLQNDIEKFVSEFISPILIKNEFDDINSKMDRLTSNDDALTIKLNNITNEVKASYLIDDQKLEISFKLPKNYPLTNIQVNGVSRVGISEQKWKQWIMSTQHVITGMNGSVLDSLELFTKNVHLQFSGFEECAICYSILHAVDRKLPSKTCPTCKNKFHGACLYKWFRSSGNNTCPLCRSEIPFRR</sequence>
<organism>
    <name type="scientific">Saccharomyces cerevisiae (strain ATCC 204508 / S288c)</name>
    <name type="common">Baker's yeast</name>
    <dbReference type="NCBI Taxonomy" id="559292"/>
    <lineage>
        <taxon>Eukaryota</taxon>
        <taxon>Fungi</taxon>
        <taxon>Dikarya</taxon>
        <taxon>Ascomycota</taxon>
        <taxon>Saccharomycotina</taxon>
        <taxon>Saccharomycetes</taxon>
        <taxon>Saccharomycetales</taxon>
        <taxon>Saccharomycetaceae</taxon>
        <taxon>Saccharomyces</taxon>
    </lineage>
</organism>
<protein>
    <recommendedName>
        <fullName evidence="18">E3 ubiquitin-protein ligase listerin</fullName>
        <ecNumber evidence="4 14">2.3.2.27</ecNumber>
    </recommendedName>
    <alternativeName>
        <fullName evidence="17">RING domain mutant killed by rtf1 deletion protein 1</fullName>
    </alternativeName>
    <alternativeName>
        <fullName evidence="19">RING-type E3 ubiquitin transferase listerin</fullName>
    </alternativeName>
</protein>
<feature type="chain" id="PRO_0000056341" description="E3 ubiquitin-protein ligase listerin">
    <location>
        <begin position="1"/>
        <end position="1562"/>
    </location>
</feature>
<feature type="repeat" description="HEAT 1" evidence="1">
    <location>
        <begin position="41"/>
        <end position="78"/>
    </location>
</feature>
<feature type="repeat" description="HEAT 2" evidence="1">
    <location>
        <begin position="127"/>
        <end position="164"/>
    </location>
</feature>
<feature type="repeat" description="HEAT 3" evidence="1">
    <location>
        <begin position="175"/>
        <end position="217"/>
    </location>
</feature>
<feature type="repeat" description="HEAT 4" evidence="1">
    <location>
        <begin position="262"/>
        <end position="301"/>
    </location>
</feature>
<feature type="repeat" description="HEAT 5" evidence="1">
    <location>
        <begin position="304"/>
        <end position="348"/>
    </location>
</feature>
<feature type="repeat" description="HEAT 6" evidence="1">
    <location>
        <begin position="495"/>
        <end position="532"/>
    </location>
</feature>
<feature type="repeat" description="HEAT 7" evidence="1">
    <location>
        <begin position="555"/>
        <end position="592"/>
    </location>
</feature>
<feature type="repeat" description="HEAT 8" evidence="1">
    <location>
        <begin position="813"/>
        <end position="850"/>
    </location>
</feature>
<feature type="repeat" description="HEAT 9" evidence="1">
    <location>
        <begin position="908"/>
        <end position="945"/>
    </location>
</feature>
<feature type="repeat" description="HEAT 10" evidence="1">
    <location>
        <begin position="997"/>
        <end position="1037"/>
    </location>
</feature>
<feature type="repeat" description="HEAT 11" evidence="1">
    <location>
        <begin position="1047"/>
        <end position="1085"/>
    </location>
</feature>
<feature type="repeat" description="HEAT 12" evidence="1">
    <location>
        <begin position="1188"/>
        <end position="1226"/>
    </location>
</feature>
<feature type="repeat" description="HEAT 13" evidence="1">
    <location>
        <begin position="1263"/>
        <end position="1298"/>
    </location>
</feature>
<feature type="repeat" description="HEAT 14" evidence="1">
    <location>
        <begin position="1299"/>
        <end position="1339"/>
    </location>
</feature>
<feature type="zinc finger region" description="RING-type" evidence="2">
    <location>
        <begin position="1508"/>
        <end position="1555"/>
    </location>
</feature>
<feature type="mutagenesis site" description="Reduced binding to stalled 60S ribosomal subunits." evidence="14">
    <original>R</original>
    <variation>A</variation>
    <location>
        <position position="57"/>
    </location>
</feature>
<feature type="mutagenesis site" description="Reduced binding to stalled 60S ribosomal subunits." evidence="14">
    <original>T</original>
    <variation>A</variation>
    <location>
        <position position="61"/>
    </location>
</feature>
<feature type="mutagenesis site" description="Abolishes catalytic activity." evidence="4">
    <original>C</original>
    <variation>A</variation>
    <location>
        <position position="1508"/>
    </location>
</feature>
<feature type="mutagenesis site" description="Abolishes ability to control levels of proteins with 'non-stop'." evidence="5">
    <original>W</original>
    <variation>A</variation>
    <variation>E</variation>
    <location>
        <position position="1542"/>
    </location>
</feature>
<feature type="strand" evidence="23">
    <location>
        <begin position="21"/>
        <end position="23"/>
    </location>
</feature>
<feature type="strand" evidence="23">
    <location>
        <begin position="27"/>
        <end position="32"/>
    </location>
</feature>
<feature type="helix" evidence="23">
    <location>
        <begin position="36"/>
        <end position="40"/>
    </location>
</feature>
<feature type="helix" evidence="23">
    <location>
        <begin position="45"/>
        <end position="54"/>
    </location>
</feature>
<feature type="helix" evidence="23">
    <location>
        <begin position="59"/>
        <end position="74"/>
    </location>
</feature>
<feature type="turn" evidence="23">
    <location>
        <begin position="75"/>
        <end position="78"/>
    </location>
</feature>
<feature type="helix" evidence="24">
    <location>
        <begin position="80"/>
        <end position="82"/>
    </location>
</feature>
<feature type="helix" evidence="23">
    <location>
        <begin position="85"/>
        <end position="98"/>
    </location>
</feature>
<feature type="helix" evidence="23">
    <location>
        <begin position="104"/>
        <end position="120"/>
    </location>
</feature>
<feature type="turn" evidence="23">
    <location>
        <begin position="122"/>
        <end position="125"/>
    </location>
</feature>
<feature type="helix" evidence="23">
    <location>
        <begin position="126"/>
        <end position="128"/>
    </location>
</feature>
<feature type="helix" evidence="23">
    <location>
        <begin position="129"/>
        <end position="140"/>
    </location>
</feature>
<feature type="helix" evidence="23">
    <location>
        <begin position="145"/>
        <end position="158"/>
    </location>
</feature>
<feature type="turn" evidence="23">
    <location>
        <begin position="159"/>
        <end position="161"/>
    </location>
</feature>
<feature type="helix" evidence="23">
    <location>
        <begin position="163"/>
        <end position="172"/>
    </location>
</feature>
<feature type="helix" evidence="23">
    <location>
        <begin position="174"/>
        <end position="185"/>
    </location>
</feature>
<feature type="helix" evidence="23">
    <location>
        <begin position="190"/>
        <end position="193"/>
    </location>
</feature>
<feature type="turn" evidence="23">
    <location>
        <begin position="196"/>
        <end position="198"/>
    </location>
</feature>
<feature type="helix" evidence="23">
    <location>
        <begin position="201"/>
        <end position="225"/>
    </location>
</feature>
<feature type="helix" evidence="23">
    <location>
        <begin position="229"/>
        <end position="232"/>
    </location>
</feature>
<feature type="helix" evidence="23">
    <location>
        <begin position="234"/>
        <end position="242"/>
    </location>
</feature>
<feature type="strand" evidence="24">
    <location>
        <begin position="243"/>
        <end position="246"/>
    </location>
</feature>
<feature type="helix" evidence="23">
    <location>
        <begin position="247"/>
        <end position="249"/>
    </location>
</feature>
<feature type="strand" evidence="23">
    <location>
        <begin position="253"/>
        <end position="256"/>
    </location>
</feature>
<feature type="helix" evidence="23">
    <location>
        <begin position="259"/>
        <end position="273"/>
    </location>
</feature>
<feature type="helix" evidence="23">
    <location>
        <begin position="276"/>
        <end position="279"/>
    </location>
</feature>
<feature type="helix" evidence="23">
    <location>
        <begin position="281"/>
        <end position="294"/>
    </location>
</feature>
<feature type="helix" evidence="23">
    <location>
        <begin position="295"/>
        <end position="297"/>
    </location>
</feature>
<feature type="turn" evidence="23">
    <location>
        <begin position="300"/>
        <end position="302"/>
    </location>
</feature>
<feature type="helix" evidence="23">
    <location>
        <begin position="303"/>
        <end position="306"/>
    </location>
</feature>
<feature type="helix" evidence="23">
    <location>
        <begin position="307"/>
        <end position="309"/>
    </location>
</feature>
<feature type="helix" evidence="23">
    <location>
        <begin position="310"/>
        <end position="320"/>
    </location>
</feature>
<feature type="turn" evidence="23">
    <location>
        <begin position="321"/>
        <end position="326"/>
    </location>
</feature>
<feature type="helix" evidence="23">
    <location>
        <begin position="327"/>
        <end position="331"/>
    </location>
</feature>
<feature type="helix" evidence="23">
    <location>
        <begin position="335"/>
        <end position="346"/>
    </location>
</feature>
<feature type="helix" evidence="23">
    <location>
        <begin position="354"/>
        <end position="365"/>
    </location>
</feature>
<feature type="helix" evidence="23">
    <location>
        <begin position="366"/>
        <end position="368"/>
    </location>
</feature>
<feature type="turn" evidence="23">
    <location>
        <begin position="373"/>
        <end position="376"/>
    </location>
</feature>
<feature type="helix" evidence="23">
    <location>
        <begin position="377"/>
        <end position="391"/>
    </location>
</feature>
<feature type="helix" evidence="23">
    <location>
        <begin position="398"/>
        <end position="413"/>
    </location>
</feature>
<feature type="turn" evidence="23">
    <location>
        <begin position="414"/>
        <end position="419"/>
    </location>
</feature>
<name>LTN1_YEAST</name>
<accession>Q04781</accession>
<accession>D6W074</accession>
<accession>Q04029</accession>
<evidence type="ECO:0000255" key="1"/>
<evidence type="ECO:0000255" key="2">
    <source>
        <dbReference type="PROSITE-ProRule" id="PRU00175"/>
    </source>
</evidence>
<evidence type="ECO:0000269" key="3">
    <source>
    </source>
</evidence>
<evidence type="ECO:0000269" key="4">
    <source>
    </source>
</evidence>
<evidence type="ECO:0000269" key="5">
    <source>
    </source>
</evidence>
<evidence type="ECO:0000269" key="6">
    <source>
    </source>
</evidence>
<evidence type="ECO:0000269" key="7">
    <source>
    </source>
</evidence>
<evidence type="ECO:0000269" key="8">
    <source>
    </source>
</evidence>
<evidence type="ECO:0000269" key="9">
    <source>
    </source>
</evidence>
<evidence type="ECO:0000269" key="10">
    <source>
    </source>
</evidence>
<evidence type="ECO:0000269" key="11">
    <source>
    </source>
</evidence>
<evidence type="ECO:0000269" key="12">
    <source>
    </source>
</evidence>
<evidence type="ECO:0000269" key="13">
    <source>
    </source>
</evidence>
<evidence type="ECO:0000269" key="14">
    <source>
    </source>
</evidence>
<evidence type="ECO:0000269" key="15">
    <source>
    </source>
</evidence>
<evidence type="ECO:0000269" key="16">
    <source>
    </source>
</evidence>
<evidence type="ECO:0000303" key="17">
    <source>
    </source>
</evidence>
<evidence type="ECO:0000303" key="18">
    <source>
    </source>
</evidence>
<evidence type="ECO:0000305" key="19"/>
<evidence type="ECO:0000312" key="20">
    <source>
        <dbReference type="SGD" id="S000004861"/>
    </source>
</evidence>
<evidence type="ECO:0007744" key="21">
    <source>
        <dbReference type="PDB" id="5FG0"/>
    </source>
</evidence>
<evidence type="ECO:0007744" key="22">
    <source>
        <dbReference type="PDB" id="5FG1"/>
    </source>
</evidence>
<evidence type="ECO:0007829" key="23">
    <source>
        <dbReference type="PDB" id="5FG0"/>
    </source>
</evidence>
<evidence type="ECO:0007829" key="24">
    <source>
        <dbReference type="PDB" id="5FG1"/>
    </source>
</evidence>
<proteinExistence type="evidence at protein level"/>
<gene>
    <name evidence="17" type="primary">RKR1</name>
    <name evidence="18" type="synonym">LTN1</name>
    <name evidence="20" type="ordered locus">YMR247C</name>
    <name type="ORF">YM9408.09C</name>
    <name type="ORF">YM9920.01C</name>
</gene>
<reference key="1">
    <citation type="journal article" date="1997" name="Nature">
        <title>The nucleotide sequence of Saccharomyces cerevisiae chromosome XIII.</title>
        <authorList>
            <person name="Bowman S."/>
            <person name="Churcher C.M."/>
            <person name="Badcock K."/>
            <person name="Brown D."/>
            <person name="Chillingworth T."/>
            <person name="Connor R."/>
            <person name="Dedman K."/>
            <person name="Devlin K."/>
            <person name="Gentles S."/>
            <person name="Hamlin N."/>
            <person name="Hunt S."/>
            <person name="Jagels K."/>
            <person name="Lye G."/>
            <person name="Moule S."/>
            <person name="Odell C."/>
            <person name="Pearson D."/>
            <person name="Rajandream M.A."/>
            <person name="Rice P."/>
            <person name="Skelton J."/>
            <person name="Walsh S.V."/>
            <person name="Whitehead S."/>
            <person name="Barrell B.G."/>
        </authorList>
    </citation>
    <scope>NUCLEOTIDE SEQUENCE [LARGE SCALE GENOMIC DNA]</scope>
    <source>
        <strain>ATCC 204508 / S288c</strain>
    </source>
</reference>
<reference key="2">
    <citation type="journal article" date="2014" name="G3 (Bethesda)">
        <title>The reference genome sequence of Saccharomyces cerevisiae: Then and now.</title>
        <authorList>
            <person name="Engel S.R."/>
            <person name="Dietrich F.S."/>
            <person name="Fisk D.G."/>
            <person name="Binkley G."/>
            <person name="Balakrishnan R."/>
            <person name="Costanzo M.C."/>
            <person name="Dwight S.S."/>
            <person name="Hitz B.C."/>
            <person name="Karra K."/>
            <person name="Nash R.S."/>
            <person name="Weng S."/>
            <person name="Wong E.D."/>
            <person name="Lloyd P."/>
            <person name="Skrzypek M.S."/>
            <person name="Miyasato S.R."/>
            <person name="Simison M."/>
            <person name="Cherry J.M."/>
        </authorList>
    </citation>
    <scope>GENOME REANNOTATION</scope>
    <source>
        <strain>ATCC 204508 / S288c</strain>
    </source>
</reference>
<reference key="3">
    <citation type="journal article" date="2003" name="Nature">
        <title>Global analysis of protein expression in yeast.</title>
        <authorList>
            <person name="Ghaemmaghami S."/>
            <person name="Huh W.-K."/>
            <person name="Bower K."/>
            <person name="Howson R.W."/>
            <person name="Belle A."/>
            <person name="Dephoure N."/>
            <person name="O'Shea E.K."/>
            <person name="Weissman J.S."/>
        </authorList>
    </citation>
    <scope>LEVEL OF PROTEIN EXPRESSION [LARGE SCALE ANALYSIS]</scope>
</reference>
<reference key="4">
    <citation type="journal article" date="2007" name="Mol. Cell. Biol.">
        <title>Identification of Rkr1, a nuclear RING domain protein with functional connections to chromatin modification in Saccharomyces cerevisiae.</title>
        <authorList>
            <person name="Braun M.A."/>
            <person name="Costa P.J."/>
            <person name="Crisucci E.M."/>
            <person name="Arndt K.M."/>
        </authorList>
    </citation>
    <scope>FUNCTION</scope>
    <scope>CATALYTIC ACTIVITY</scope>
    <scope>PATHWAY</scope>
    <scope>SUBCELLULAR LOCATION</scope>
    <scope>MUTAGENESIS OF CYS-1508</scope>
</reference>
<reference key="5">
    <citation type="journal article" date="2010" name="Nature">
        <title>Role of a ribosome-associated E3 ubiquitin ligase in protein quality control.</title>
        <authorList>
            <person name="Bengtson M.H."/>
            <person name="Joazeiro C.A."/>
        </authorList>
    </citation>
    <scope>FUNCTION</scope>
    <scope>RIBOSOME-BINDING</scope>
    <scope>SUBCELLULAR LOCATION</scope>
    <scope>MUTAGENESIS OF TRP-1542</scope>
</reference>
<reference key="6">
    <citation type="journal article" date="2012" name="Cell">
        <title>A ribosome-bound quality control complex triggers degradation of nascent peptides and signals translation stress.</title>
        <authorList>
            <person name="Brandman O."/>
            <person name="Stewart-Ornstein J."/>
            <person name="Wong D."/>
            <person name="Larson A."/>
            <person name="Williams C.C."/>
            <person name="Li G.W."/>
            <person name="Zhou S."/>
            <person name="King D."/>
            <person name="Shen P.S."/>
            <person name="Weibezahn J."/>
            <person name="Dunn J.G."/>
            <person name="Rouskin S."/>
            <person name="Inada T."/>
            <person name="Frost A."/>
            <person name="Weissman J.S."/>
        </authorList>
    </citation>
    <scope>FUNCTION</scope>
    <scope>SUBUNIT</scope>
</reference>
<reference key="7">
    <citation type="journal article" date="2013" name="Proc. Natl. Acad. Sci. U.S.A.">
        <title>Cdc48-associated complex bound to 60S particles is required for the clearance of aberrant translation products.</title>
        <authorList>
            <person name="Defenouillere Q."/>
            <person name="Yao Y."/>
            <person name="Mouaikel J."/>
            <person name="Namane A."/>
            <person name="Galopier A."/>
            <person name="Decourty L."/>
            <person name="Doyen A."/>
            <person name="Malabat C."/>
            <person name="Saveanu C."/>
            <person name="Jacquier A."/>
            <person name="Fromont-Racine M."/>
        </authorList>
    </citation>
    <scope>SUBUNIT</scope>
</reference>
<reference key="8">
    <citation type="journal article" date="2013" name="RNA">
        <title>Translation of CGA codon repeats in yeast involves quality control components and ribosomal protein L1.</title>
        <authorList>
            <person name="Letzring D.P."/>
            <person name="Wolf A.S."/>
            <person name="Brule C.E."/>
            <person name="Grayhack E.J."/>
        </authorList>
    </citation>
    <scope>FUNCTION</scope>
</reference>
<reference key="9">
    <citation type="journal article" date="2014" name="Genes Cells">
        <title>Protein quality control systems associated with no-go and nonstop mRNA surveillance in yeast.</title>
        <authorList>
            <person name="Matsuda R."/>
            <person name="Ikeuchi K."/>
            <person name="Nomura S."/>
            <person name="Inada T."/>
        </authorList>
    </citation>
    <scope>FUNCTION</scope>
</reference>
<reference key="10">
    <citation type="journal article" date="2014" name="Proc. Natl. Acad. Sci. U.S.A.">
        <title>Structural basis for translational surveillance by the large ribosomal subunit-associated protein quality control complex.</title>
        <authorList>
            <person name="Lyumkis D."/>
            <person name="Oliveira dos Passos D."/>
            <person name="Tahara E.B."/>
            <person name="Webb K."/>
            <person name="Bennett E.J."/>
            <person name="Vinterbo S."/>
            <person name="Potter C.S."/>
            <person name="Carragher B."/>
            <person name="Joazeiro C.A."/>
        </authorList>
    </citation>
    <scope>SUBUNIT</scope>
</reference>
<reference key="11">
    <citation type="journal article" date="2015" name="J. Biol. Chem.">
        <title>Rkr1/Ltn1 ubiquitin ligase-mediated degradation of translationally stalled endoplasmic reticulum proteins.</title>
        <authorList>
            <person name="Crowder J.J."/>
            <person name="Geigges M."/>
            <person name="Gibson R.T."/>
            <person name="Fults E.S."/>
            <person name="Buchanan B.W."/>
            <person name="Sachs N."/>
            <person name="Schink A."/>
            <person name="Kreft S.G."/>
            <person name="Rubenstein E.M."/>
        </authorList>
    </citation>
    <scope>FUNCTION</scope>
</reference>
<reference key="12">
    <citation type="journal article" date="2015" name="Science">
        <title>Protein synthesis. Rqc2p and 60S ribosomal subunits mediate mRNA-independent elongation of nascent chains.</title>
        <authorList>
            <person name="Shen P.S."/>
            <person name="Park J."/>
            <person name="Qin Y."/>
            <person name="Li X."/>
            <person name="Parsawar K."/>
            <person name="Larson M.H."/>
            <person name="Cox J."/>
            <person name="Cheng Y."/>
            <person name="Lambowitz A.M."/>
            <person name="Weissman J.S."/>
            <person name="Brandman O."/>
            <person name="Frost A."/>
        </authorList>
    </citation>
    <scope>SUBUNIT</scope>
</reference>
<reference key="13">
    <citation type="journal article" date="2016" name="J. Biol. Chem.">
        <title>Rqc1 and Ltn1 prevent C-terminal alanine-threonine tail (CAT-tail)-induced protein aggregation by efficient recruitment of Cdc48 on stalled 60S subunits.</title>
        <authorList>
            <person name="Defenouillere Q."/>
            <person name="Zhang E."/>
            <person name="Namane A."/>
            <person name="Mouaikel J."/>
            <person name="Jacquier A."/>
            <person name="Fromont-Racine M."/>
        </authorList>
    </citation>
    <scope>FUNCTION</scope>
    <scope>DISRUPTION PHENOTYPE</scope>
</reference>
<reference key="14">
    <citation type="journal article" date="2016" name="Nature">
        <title>Failure of RQC machinery causes protein aggregation and proteotoxic stress.</title>
        <authorList>
            <person name="Choe Y.J."/>
            <person name="Park S.H."/>
            <person name="Hassemer T."/>
            <person name="Koerner R."/>
            <person name="Vincenz-Donnelly L."/>
            <person name="Hayer-Hartl M."/>
            <person name="Hartl F.U."/>
        </authorList>
    </citation>
    <scope>FUNCTION</scope>
    <scope>DISRUPTION PHENOTYPE</scope>
</reference>
<reference key="15">
    <citation type="journal article" date="2019" name="Nat. Struct. Mol. Biol.">
        <title>CAT tails drive degradation of stalled polypeptides on and off the ribosome.</title>
        <authorList>
            <person name="Sitron C.S."/>
            <person name="Brandman O."/>
        </authorList>
    </citation>
    <scope>FUNCTION</scope>
</reference>
<reference evidence="21 22" key="16">
    <citation type="journal article" date="2016" name="Proc. Natl. Acad. Sci. U.S.A.">
        <title>Structure and function of the yeast listerin (Ltn1) conserved N-terminal domain in binding to stalled 60S ribosomal subunits.</title>
        <authorList>
            <person name="Doamekpor S.K."/>
            <person name="Lee J.W."/>
            <person name="Hepowit N.L."/>
            <person name="Wu C."/>
            <person name="Charenton C."/>
            <person name="Leonard M."/>
            <person name="Bengtson M.H."/>
            <person name="Rajashankar K.R."/>
            <person name="Sachs M.S."/>
            <person name="Lima C.D."/>
            <person name="Joazeiro C.A."/>
        </authorList>
    </citation>
    <scope>X-RAY CRYSTALLOGRAPHY (2.41 ANGSTROMS) OF 13-424</scope>
    <scope>FUNCTION</scope>
    <scope>CATALYTIC ACTIVITY</scope>
    <scope>PATHWAY</scope>
    <scope>MUTAGENESIS OF ARG-57 AND THR-61</scope>
</reference>
<reference key="17">
    <citation type="journal article" date="2023" name="Mol. Cell">
        <title>Molecular basis of eIF5A-dependent CAT tailing in eukaryotic ribosome-associated quality control.</title>
        <authorList>
            <person name="Tesina P."/>
            <person name="Ebine S."/>
            <person name="Buschauer R."/>
            <person name="Thoms M."/>
            <person name="Matsuo Y."/>
            <person name="Inada T."/>
            <person name="Beckmann R."/>
        </authorList>
    </citation>
    <scope>STRUCTURE BY ELECTRON MICROSCOPY (2.7 ANGSTROMS) IN COMPLEX WITH RQC2; HYP2; TIF6 AND 60S RIBOSOMAL SUBUNIT</scope>
    <scope>FUNCTION</scope>
</reference>
<comment type="function">
    <text evidence="4 5 6 8 9 11 12 13 15 16">E3 ubiquitin-protein ligase component of the ribosome quality control complex (RQC), a ribosome-associated complex that mediates ubiquitination and extraction of incompletely synthesized nascent chains for proteasomal degradation (PubMed:23178123, PubMed:26055716, PubMed:26934223, PubMed:27385828, PubMed:31133701, PubMed:36804914). Mediates ubiquitination of proteins derived from mRNAs lacking stop codons (non-stop proteins) and other translation arrest products induced by poly-lysine sequences and tandem rare codons (PubMed:20835226, PubMed:23825054, PubMed:24261871, PubMed:26934223, PubMed:31133701). Ubiquitination leads to CDC48 recruitment for extraction and degradation of the incomplete translation product (PubMed:26055716, PubMed:27129255). May indirectly play a role in chromatin function and transcription (PubMed:17283062).</text>
</comment>
<comment type="catalytic activity">
    <reaction evidence="4 14">
        <text>S-ubiquitinyl-[E2 ubiquitin-conjugating enzyme]-L-cysteine + [acceptor protein]-L-lysine = [E2 ubiquitin-conjugating enzyme]-L-cysteine + N(6)-ubiquitinyl-[acceptor protein]-L-lysine.</text>
        <dbReference type="EC" id="2.3.2.27"/>
    </reaction>
</comment>
<comment type="pathway">
    <text evidence="4 14">Protein modification; protein ubiquitination.</text>
</comment>
<comment type="subunit">
    <text evidence="6 7 10">Component of the ribosome quality control complex (RQC), composed of the E3 ubiquitin ligase RKR1/LTN1, RQC1 and RQC2, as well as CDC48 and its ubiquitin-binding cofactors associated with the 60S ribosomal subunits (PubMed:23178123, PubMed:23479637, PubMed:25349383).</text>
</comment>
<comment type="subcellular location">
    <subcellularLocation>
        <location evidence="4">Nucleus</location>
    </subcellularLocation>
    <subcellularLocation>
        <location evidence="5">Cytoplasm</location>
        <location evidence="5">Cytosol</location>
    </subcellularLocation>
</comment>
<comment type="disruption phenotype">
    <text evidence="12 13">Formation of detergent-resistant aggregates and inclusions composed of stalled proteins: defects are caused by inability to ubiquitinate and degrade stalled proteins (PubMed:26934223, PubMed:27129255). CAT-tailed protein species tend to aggregate and sequester chaperones and can induce proteotoxic stress (PubMed:26934223, PubMed:27129255).</text>
</comment>
<comment type="miscellaneous">
    <text evidence="3">Present with 222 molecules/cell in log phase SD medium.</text>
</comment>
<comment type="similarity">
    <text evidence="19">Belongs to the LTN1 family.</text>
</comment>
<dbReference type="EC" id="2.3.2.27" evidence="4 14"/>
<dbReference type="EMBL" id="Z48639">
    <property type="protein sequence ID" value="CAA88574.1"/>
    <property type="molecule type" value="Genomic_DNA"/>
</dbReference>
<dbReference type="EMBL" id="Z48756">
    <property type="protein sequence ID" value="CAA88657.1"/>
    <property type="molecule type" value="Genomic_DNA"/>
</dbReference>
<dbReference type="EMBL" id="BK006946">
    <property type="protein sequence ID" value="DAA10148.1"/>
    <property type="molecule type" value="Genomic_DNA"/>
</dbReference>
<dbReference type="PIR" id="S53069">
    <property type="entry name" value="S53069"/>
</dbReference>
<dbReference type="RefSeq" id="NP_013975.1">
    <property type="nucleotide sequence ID" value="NM_001182755.1"/>
</dbReference>
<dbReference type="PDB" id="5FG0">
    <property type="method" value="X-ray"/>
    <property type="resolution" value="2.41 A"/>
    <property type="chains" value="A/B=13-424"/>
</dbReference>
<dbReference type="PDB" id="5FG1">
    <property type="method" value="X-ray"/>
    <property type="resolution" value="2.55 A"/>
    <property type="chains" value="A=13-424"/>
</dbReference>
<dbReference type="PDB" id="8AAF">
    <property type="method" value="EM"/>
    <property type="resolution" value="2.50 A"/>
    <property type="chains" value="e=1-1562"/>
</dbReference>
<dbReference type="PDB" id="8AGT">
    <property type="method" value="EM"/>
    <property type="resolution" value="2.60 A"/>
    <property type="chains" value="e=1-1562"/>
</dbReference>
<dbReference type="PDB" id="8AGU">
    <property type="method" value="EM"/>
    <property type="resolution" value="2.70 A"/>
    <property type="chains" value="e=1-1562"/>
</dbReference>
<dbReference type="PDB" id="8AGV">
    <property type="method" value="EM"/>
    <property type="resolution" value="2.60 A"/>
    <property type="chains" value="e=1-1562"/>
</dbReference>
<dbReference type="PDB" id="8AGW">
    <property type="method" value="EM"/>
    <property type="resolution" value="2.60 A"/>
    <property type="chains" value="e=1-1562"/>
</dbReference>
<dbReference type="PDB" id="8AGX">
    <property type="method" value="EM"/>
    <property type="resolution" value="2.40 A"/>
    <property type="chains" value="e=1-1562"/>
</dbReference>
<dbReference type="PDB" id="8AGZ">
    <property type="method" value="EM"/>
    <property type="resolution" value="2.60 A"/>
    <property type="chains" value="e=1-1562"/>
</dbReference>
<dbReference type="PDBsum" id="5FG0"/>
<dbReference type="PDBsum" id="5FG1"/>
<dbReference type="PDBsum" id="8AAF"/>
<dbReference type="PDBsum" id="8AGT"/>
<dbReference type="PDBsum" id="8AGU"/>
<dbReference type="PDBsum" id="8AGV"/>
<dbReference type="PDBsum" id="8AGW"/>
<dbReference type="PDBsum" id="8AGX"/>
<dbReference type="PDBsum" id="8AGZ"/>
<dbReference type="EMDB" id="EMD-15296"/>
<dbReference type="EMDB" id="EMD-15423"/>
<dbReference type="EMDB" id="EMD-15424"/>
<dbReference type="EMDB" id="EMD-15425"/>
<dbReference type="EMDB" id="EMD-15426"/>
<dbReference type="EMDB" id="EMD-15427"/>
<dbReference type="EMDB" id="EMD-15428"/>
<dbReference type="SMR" id="Q04781"/>
<dbReference type="BioGRID" id="35426">
    <property type="interactions" value="194"/>
</dbReference>
<dbReference type="ComplexPortal" id="CPX-3265">
    <property type="entry name" value="Ribosome quality control complex"/>
</dbReference>
<dbReference type="FunCoup" id="Q04781">
    <property type="interactions" value="705"/>
</dbReference>
<dbReference type="IntAct" id="Q04781">
    <property type="interactions" value="3"/>
</dbReference>
<dbReference type="MINT" id="Q04781"/>
<dbReference type="STRING" id="4932.YMR247C"/>
<dbReference type="iPTMnet" id="Q04781"/>
<dbReference type="PaxDb" id="4932-YMR247C"/>
<dbReference type="PeptideAtlas" id="Q04781"/>
<dbReference type="EnsemblFungi" id="YMR247C_mRNA">
    <property type="protein sequence ID" value="YMR247C"/>
    <property type="gene ID" value="YMR247C"/>
</dbReference>
<dbReference type="GeneID" id="855289"/>
<dbReference type="KEGG" id="sce:YMR247C"/>
<dbReference type="AGR" id="SGD:S000004861"/>
<dbReference type="SGD" id="S000004861">
    <property type="gene designation" value="RKR1"/>
</dbReference>
<dbReference type="VEuPathDB" id="FungiDB:YMR247C"/>
<dbReference type="eggNOG" id="KOG0803">
    <property type="taxonomic scope" value="Eukaryota"/>
</dbReference>
<dbReference type="GeneTree" id="ENSGT00390000016055"/>
<dbReference type="HOGENOM" id="CLU_262564_0_0_1"/>
<dbReference type="InParanoid" id="Q04781"/>
<dbReference type="OMA" id="NRFHGAC"/>
<dbReference type="OrthoDB" id="6108at2759"/>
<dbReference type="BioCyc" id="YEAST:G3O-32926-MONOMER"/>
<dbReference type="Reactome" id="R-SCE-983168">
    <property type="pathway name" value="Antigen processing: Ubiquitination &amp; Proteasome degradation"/>
</dbReference>
<dbReference type="UniPathway" id="UPA00143"/>
<dbReference type="BioGRID-ORCS" id="855289">
    <property type="hits" value="0 hits in 10 CRISPR screens"/>
</dbReference>
<dbReference type="PRO" id="PR:Q04781"/>
<dbReference type="Proteomes" id="UP000002311">
    <property type="component" value="Chromosome XIII"/>
</dbReference>
<dbReference type="RNAct" id="Q04781">
    <property type="molecule type" value="protein"/>
</dbReference>
<dbReference type="GO" id="GO:0000781">
    <property type="term" value="C:chromosome, telomeric region"/>
    <property type="evidence" value="ECO:0007669"/>
    <property type="project" value="GOC"/>
</dbReference>
<dbReference type="GO" id="GO:0005829">
    <property type="term" value="C:cytosol"/>
    <property type="evidence" value="ECO:0000314"/>
    <property type="project" value="UniProtKB"/>
</dbReference>
<dbReference type="GO" id="GO:0022626">
    <property type="term" value="C:cytosolic ribosome"/>
    <property type="evidence" value="ECO:0000314"/>
    <property type="project" value="UniProt"/>
</dbReference>
<dbReference type="GO" id="GO:0005634">
    <property type="term" value="C:nucleus"/>
    <property type="evidence" value="ECO:0000314"/>
    <property type="project" value="SGD"/>
</dbReference>
<dbReference type="GO" id="GO:1990112">
    <property type="term" value="C:RQC complex"/>
    <property type="evidence" value="ECO:0000314"/>
    <property type="project" value="UniProtKB"/>
</dbReference>
<dbReference type="GO" id="GO:0043023">
    <property type="term" value="F:ribosomal large subunit binding"/>
    <property type="evidence" value="ECO:0000314"/>
    <property type="project" value="UniProtKB"/>
</dbReference>
<dbReference type="GO" id="GO:0061630">
    <property type="term" value="F:ubiquitin protein ligase activity"/>
    <property type="evidence" value="ECO:0000314"/>
    <property type="project" value="UniProtKB"/>
</dbReference>
<dbReference type="GO" id="GO:0004842">
    <property type="term" value="F:ubiquitin-protein transferase activity"/>
    <property type="evidence" value="ECO:0000314"/>
    <property type="project" value="SGD"/>
</dbReference>
<dbReference type="GO" id="GO:0008270">
    <property type="term" value="F:zinc ion binding"/>
    <property type="evidence" value="ECO:0007669"/>
    <property type="project" value="UniProtKB-KW"/>
</dbReference>
<dbReference type="GO" id="GO:0006325">
    <property type="term" value="P:chromatin organization"/>
    <property type="evidence" value="ECO:0000316"/>
    <property type="project" value="SGD"/>
</dbReference>
<dbReference type="GO" id="GO:0010498">
    <property type="term" value="P:proteasomal protein catabolic process"/>
    <property type="evidence" value="ECO:0000315"/>
    <property type="project" value="SGD"/>
</dbReference>
<dbReference type="GO" id="GO:0030163">
    <property type="term" value="P:protein catabolic process"/>
    <property type="evidence" value="ECO:0000315"/>
    <property type="project" value="SGD"/>
</dbReference>
<dbReference type="GO" id="GO:0016567">
    <property type="term" value="P:protein ubiquitination"/>
    <property type="evidence" value="ECO:0000314"/>
    <property type="project" value="SGD"/>
</dbReference>
<dbReference type="GO" id="GO:0072344">
    <property type="term" value="P:rescue of stalled ribosome"/>
    <property type="evidence" value="ECO:0000314"/>
    <property type="project" value="UniProtKB"/>
</dbReference>
<dbReference type="GO" id="GO:1990116">
    <property type="term" value="P:ribosome-associated ubiquitin-dependent protein catabolic process"/>
    <property type="evidence" value="ECO:0000314"/>
    <property type="project" value="UniProtKB"/>
</dbReference>
<dbReference type="GO" id="GO:0031509">
    <property type="term" value="P:subtelomeric heterochromatin formation"/>
    <property type="evidence" value="ECO:0000315"/>
    <property type="project" value="SGD"/>
</dbReference>
<dbReference type="GO" id="GO:0006511">
    <property type="term" value="P:ubiquitin-dependent protein catabolic process"/>
    <property type="evidence" value="ECO:0000315"/>
    <property type="project" value="SGD"/>
</dbReference>
<dbReference type="CDD" id="cd16491">
    <property type="entry name" value="RING-CH-C4HC3_LTN1"/>
    <property type="match status" value="1"/>
</dbReference>
<dbReference type="FunFam" id="3.30.40.10:FF:000038">
    <property type="entry name" value="E3 ubiquitin-protein ligase listerin"/>
    <property type="match status" value="1"/>
</dbReference>
<dbReference type="Gene3D" id="3.30.40.10">
    <property type="entry name" value="Zinc/RING finger domain, C3HC4 (zinc finger)"/>
    <property type="match status" value="1"/>
</dbReference>
<dbReference type="InterPro" id="IPR016024">
    <property type="entry name" value="ARM-type_fold"/>
</dbReference>
<dbReference type="InterPro" id="IPR039795">
    <property type="entry name" value="LTN1/Rkr1"/>
</dbReference>
<dbReference type="InterPro" id="IPR054477">
    <property type="entry name" value="LTN1_E3_ligase_6th"/>
</dbReference>
<dbReference type="InterPro" id="IPR054476">
    <property type="entry name" value="Ltn1_N"/>
</dbReference>
<dbReference type="InterPro" id="IPR054478">
    <property type="entry name" value="LTN1_UBC"/>
</dbReference>
<dbReference type="InterPro" id="IPR039804">
    <property type="entry name" value="RING-CH-C4HC3_LTN1"/>
</dbReference>
<dbReference type="InterPro" id="IPR001841">
    <property type="entry name" value="Znf_RING"/>
</dbReference>
<dbReference type="InterPro" id="IPR011016">
    <property type="entry name" value="Znf_RING-CH"/>
</dbReference>
<dbReference type="InterPro" id="IPR013083">
    <property type="entry name" value="Znf_RING/FYVE/PHD"/>
</dbReference>
<dbReference type="PANTHER" id="PTHR12389:SF0">
    <property type="entry name" value="E3 UBIQUITIN-PROTEIN LIGASE LISTERIN"/>
    <property type="match status" value="1"/>
</dbReference>
<dbReference type="PANTHER" id="PTHR12389">
    <property type="entry name" value="ZINC FINGER PROTEIN 294"/>
    <property type="match status" value="1"/>
</dbReference>
<dbReference type="Pfam" id="PF22958">
    <property type="entry name" value="Ltn1_1st"/>
    <property type="match status" value="1"/>
</dbReference>
<dbReference type="Pfam" id="PF22999">
    <property type="entry name" value="LTN1_E3_ligase_6th"/>
    <property type="match status" value="1"/>
</dbReference>
<dbReference type="Pfam" id="PF23009">
    <property type="entry name" value="UBC_like"/>
    <property type="match status" value="1"/>
</dbReference>
<dbReference type="Pfam" id="PF13639">
    <property type="entry name" value="zf-RING_2"/>
    <property type="match status" value="1"/>
</dbReference>
<dbReference type="SMART" id="SM01197">
    <property type="entry name" value="FANCL_C"/>
    <property type="match status" value="1"/>
</dbReference>
<dbReference type="SMART" id="SM00744">
    <property type="entry name" value="RINGv"/>
    <property type="match status" value="1"/>
</dbReference>
<dbReference type="SUPFAM" id="SSF48371">
    <property type="entry name" value="ARM repeat"/>
    <property type="match status" value="1"/>
</dbReference>
<dbReference type="SUPFAM" id="SSF57850">
    <property type="entry name" value="RING/U-box"/>
    <property type="match status" value="1"/>
</dbReference>
<dbReference type="PROSITE" id="PS50089">
    <property type="entry name" value="ZF_RING_2"/>
    <property type="match status" value="1"/>
</dbReference>